<gene>
    <name type="primary">MT-ND1</name>
    <name type="synonym">MTND1</name>
    <name type="synonym">NADH1</name>
    <name type="synonym">ND1</name>
</gene>
<proteinExistence type="inferred from homology"/>
<dbReference type="EC" id="7.1.1.2" evidence="1"/>
<dbReference type="EMBL" id="X61145">
    <property type="protein sequence ID" value="CAA43444.1"/>
    <property type="molecule type" value="Genomic_DNA"/>
</dbReference>
<dbReference type="PIR" id="A58850">
    <property type="entry name" value="A58850"/>
</dbReference>
<dbReference type="RefSeq" id="NP_006889.1">
    <property type="nucleotide sequence ID" value="NC_001321.1"/>
</dbReference>
<dbReference type="SMR" id="P24967"/>
<dbReference type="GeneID" id="807618"/>
<dbReference type="CTD" id="4535"/>
<dbReference type="GO" id="GO:0005743">
    <property type="term" value="C:mitochondrial inner membrane"/>
    <property type="evidence" value="ECO:0000250"/>
    <property type="project" value="UniProtKB"/>
</dbReference>
<dbReference type="GO" id="GO:0008137">
    <property type="term" value="F:NADH dehydrogenase (ubiquinone) activity"/>
    <property type="evidence" value="ECO:0000250"/>
    <property type="project" value="UniProtKB"/>
</dbReference>
<dbReference type="GO" id="GO:0006120">
    <property type="term" value="P:mitochondrial electron transport, NADH to ubiquinone"/>
    <property type="evidence" value="ECO:0000250"/>
    <property type="project" value="UniProtKB"/>
</dbReference>
<dbReference type="GO" id="GO:0032981">
    <property type="term" value="P:mitochondrial respiratory chain complex I assembly"/>
    <property type="evidence" value="ECO:0000250"/>
    <property type="project" value="UniProtKB"/>
</dbReference>
<dbReference type="HAMAP" id="MF_01350">
    <property type="entry name" value="NDH1_NuoH"/>
    <property type="match status" value="1"/>
</dbReference>
<dbReference type="InterPro" id="IPR001694">
    <property type="entry name" value="NADH_UbQ_OxRdtase_su1/FPO"/>
</dbReference>
<dbReference type="InterPro" id="IPR018086">
    <property type="entry name" value="NADH_UbQ_OxRdtase_su1_CS"/>
</dbReference>
<dbReference type="PANTHER" id="PTHR11432">
    <property type="entry name" value="NADH DEHYDROGENASE SUBUNIT 1"/>
    <property type="match status" value="1"/>
</dbReference>
<dbReference type="PANTHER" id="PTHR11432:SF3">
    <property type="entry name" value="NADH-UBIQUINONE OXIDOREDUCTASE CHAIN 1"/>
    <property type="match status" value="1"/>
</dbReference>
<dbReference type="Pfam" id="PF00146">
    <property type="entry name" value="NADHdh"/>
    <property type="match status" value="1"/>
</dbReference>
<dbReference type="PROSITE" id="PS00667">
    <property type="entry name" value="COMPLEX1_ND1_1"/>
    <property type="match status" value="1"/>
</dbReference>
<dbReference type="PROSITE" id="PS00668">
    <property type="entry name" value="COMPLEX1_ND1_2"/>
    <property type="match status" value="1"/>
</dbReference>
<evidence type="ECO:0000250" key="1">
    <source>
        <dbReference type="UniProtKB" id="P03886"/>
    </source>
</evidence>
<evidence type="ECO:0000250" key="2">
    <source>
        <dbReference type="UniProtKB" id="P03887"/>
    </source>
</evidence>
<evidence type="ECO:0000255" key="3"/>
<evidence type="ECO:0000305" key="4"/>
<geneLocation type="mitochondrion"/>
<keyword id="KW-0249">Electron transport</keyword>
<keyword id="KW-0472">Membrane</keyword>
<keyword id="KW-0496">Mitochondrion</keyword>
<keyword id="KW-0999">Mitochondrion inner membrane</keyword>
<keyword id="KW-0520">NAD</keyword>
<keyword id="KW-0679">Respiratory chain</keyword>
<keyword id="KW-1278">Translocase</keyword>
<keyword id="KW-0812">Transmembrane</keyword>
<keyword id="KW-1133">Transmembrane helix</keyword>
<keyword id="KW-0813">Transport</keyword>
<keyword id="KW-0830">Ubiquinone</keyword>
<organism>
    <name type="scientific">Balaenoptera physalus</name>
    <name type="common">Fin whale</name>
    <name type="synonym">Balaena physalus</name>
    <dbReference type="NCBI Taxonomy" id="9770"/>
    <lineage>
        <taxon>Eukaryota</taxon>
        <taxon>Metazoa</taxon>
        <taxon>Chordata</taxon>
        <taxon>Craniata</taxon>
        <taxon>Vertebrata</taxon>
        <taxon>Euteleostomi</taxon>
        <taxon>Mammalia</taxon>
        <taxon>Eutheria</taxon>
        <taxon>Laurasiatheria</taxon>
        <taxon>Artiodactyla</taxon>
        <taxon>Whippomorpha</taxon>
        <taxon>Cetacea</taxon>
        <taxon>Mysticeti</taxon>
        <taxon>Balaenopteridae</taxon>
        <taxon>Balaenoptera</taxon>
    </lineage>
</organism>
<protein>
    <recommendedName>
        <fullName>NADH-ubiquinone oxidoreductase chain 1</fullName>
        <ecNumber evidence="1">7.1.1.2</ecNumber>
    </recommendedName>
    <alternativeName>
        <fullName>NADH dehydrogenase subunit 1</fullName>
    </alternativeName>
</protein>
<comment type="function">
    <text evidence="1">Core subunit of the mitochondrial membrane respiratory chain NADH dehydrogenase (Complex I) which catalyzes electron transfer from NADH through the respiratory chain, using ubiquinone as an electron acceptor. Essential for the catalytic activity and assembly of complex I.</text>
</comment>
<comment type="catalytic activity">
    <reaction evidence="1">
        <text>a ubiquinone + NADH + 5 H(+)(in) = a ubiquinol + NAD(+) + 4 H(+)(out)</text>
        <dbReference type="Rhea" id="RHEA:29091"/>
        <dbReference type="Rhea" id="RHEA-COMP:9565"/>
        <dbReference type="Rhea" id="RHEA-COMP:9566"/>
        <dbReference type="ChEBI" id="CHEBI:15378"/>
        <dbReference type="ChEBI" id="CHEBI:16389"/>
        <dbReference type="ChEBI" id="CHEBI:17976"/>
        <dbReference type="ChEBI" id="CHEBI:57540"/>
        <dbReference type="ChEBI" id="CHEBI:57945"/>
        <dbReference type="EC" id="7.1.1.2"/>
    </reaction>
</comment>
<comment type="subunit">
    <text evidence="2">Core subunit of respiratory chain NADH dehydrogenase (Complex I) which is composed of 45 different subunits.</text>
</comment>
<comment type="subcellular location">
    <subcellularLocation>
        <location evidence="2">Mitochondrion inner membrane</location>
        <topology evidence="3">Multi-pass membrane protein</topology>
    </subcellularLocation>
</comment>
<comment type="similarity">
    <text evidence="4">Belongs to the complex I subunit 1 family.</text>
</comment>
<sequence>MFMINILTLILPILLAVAFLTLVERKILGYMQFRKGPNIVGPHGLLQPFADAIKLFTKEPLRPATSSTTMFIIAPVLALTLALTMWSPLPMPYPLINMNLGVLFMLAMSSLAVYSILWSGWASNSKYALIGALRAVAQTISYEVTLAIILLSVLLMNGSYTLSTLATTQEQLWLLFPSWPLAMMWFISTLAETNRAPFDLTEGESELVSGFNVEYAAGPFALFFLAEYANIIMMNMLTAILFLGTFHNPHNPELYTANLIIKTLLLTMSFLWIRASYPRFRYDQLMHLLWKNFLPLTLALCMWHISLPIMTASIPPQT</sequence>
<reference key="1">
    <citation type="journal article" date="1991" name="J. Mol. Evol.">
        <title>The complete nucleotide sequence of the mitochondrial DNA of the fin whale, Balaenoptera physalus.</title>
        <authorList>
            <person name="Arnason U."/>
            <person name="Gullberg A."/>
            <person name="Widegren B."/>
        </authorList>
    </citation>
    <scope>NUCLEOTIDE SEQUENCE [GENOMIC DNA]</scope>
    <source>
        <strain>Isolate No. 27 / Anno 1987</strain>
        <tissue>Liver</tissue>
    </source>
</reference>
<feature type="chain" id="PRO_0000117353" description="NADH-ubiquinone oxidoreductase chain 1">
    <location>
        <begin position="1"/>
        <end position="318"/>
    </location>
</feature>
<feature type="transmembrane region" description="Helical" evidence="3">
    <location>
        <begin position="2"/>
        <end position="22"/>
    </location>
</feature>
<feature type="transmembrane region" description="Helical" evidence="3">
    <location>
        <begin position="70"/>
        <end position="90"/>
    </location>
</feature>
<feature type="transmembrane region" description="Helical" evidence="3">
    <location>
        <begin position="100"/>
        <end position="120"/>
    </location>
</feature>
<feature type="transmembrane region" description="Helical" evidence="3">
    <location>
        <begin position="136"/>
        <end position="156"/>
    </location>
</feature>
<feature type="transmembrane region" description="Helical" evidence="3">
    <location>
        <begin position="172"/>
        <end position="192"/>
    </location>
</feature>
<feature type="transmembrane region" description="Helical" evidence="3">
    <location>
        <begin position="222"/>
        <end position="242"/>
    </location>
</feature>
<feature type="transmembrane region" description="Helical" evidence="3">
    <location>
        <begin position="253"/>
        <end position="273"/>
    </location>
</feature>
<feature type="transmembrane region" description="Helical" evidence="3">
    <location>
        <begin position="294"/>
        <end position="314"/>
    </location>
</feature>
<name>NU1M_BALPH</name>
<accession>P24967</accession>